<dbReference type="EC" id="1.4.4.2" evidence="1"/>
<dbReference type="EMBL" id="CR626927">
    <property type="protein sequence ID" value="CAH07776.1"/>
    <property type="molecule type" value="Genomic_DNA"/>
</dbReference>
<dbReference type="RefSeq" id="WP_005800134.1">
    <property type="nucleotide sequence ID" value="NZ_UFTH01000001.1"/>
</dbReference>
<dbReference type="SMR" id="Q5LDN2"/>
<dbReference type="PaxDb" id="272559-BF9343_1995"/>
<dbReference type="GeneID" id="60365718"/>
<dbReference type="KEGG" id="bfs:BF9343_1995"/>
<dbReference type="eggNOG" id="COG0403">
    <property type="taxonomic scope" value="Bacteria"/>
</dbReference>
<dbReference type="eggNOG" id="COG1003">
    <property type="taxonomic scope" value="Bacteria"/>
</dbReference>
<dbReference type="HOGENOM" id="CLU_004620_3_2_10"/>
<dbReference type="Proteomes" id="UP000006731">
    <property type="component" value="Chromosome"/>
</dbReference>
<dbReference type="GO" id="GO:0005829">
    <property type="term" value="C:cytosol"/>
    <property type="evidence" value="ECO:0007669"/>
    <property type="project" value="TreeGrafter"/>
</dbReference>
<dbReference type="GO" id="GO:0005960">
    <property type="term" value="C:glycine cleavage complex"/>
    <property type="evidence" value="ECO:0007669"/>
    <property type="project" value="TreeGrafter"/>
</dbReference>
<dbReference type="GO" id="GO:0016594">
    <property type="term" value="F:glycine binding"/>
    <property type="evidence" value="ECO:0007669"/>
    <property type="project" value="TreeGrafter"/>
</dbReference>
<dbReference type="GO" id="GO:0004375">
    <property type="term" value="F:glycine dehydrogenase (decarboxylating) activity"/>
    <property type="evidence" value="ECO:0007669"/>
    <property type="project" value="UniProtKB-EC"/>
</dbReference>
<dbReference type="GO" id="GO:0030170">
    <property type="term" value="F:pyridoxal phosphate binding"/>
    <property type="evidence" value="ECO:0007669"/>
    <property type="project" value="TreeGrafter"/>
</dbReference>
<dbReference type="GO" id="GO:0019464">
    <property type="term" value="P:glycine decarboxylation via glycine cleavage system"/>
    <property type="evidence" value="ECO:0007669"/>
    <property type="project" value="UniProtKB-UniRule"/>
</dbReference>
<dbReference type="CDD" id="cd00613">
    <property type="entry name" value="GDC-P"/>
    <property type="match status" value="2"/>
</dbReference>
<dbReference type="FunFam" id="3.40.640.10:FF:000224">
    <property type="entry name" value="Probable glycine dehydrogenase (decarboxylating) subunit 2"/>
    <property type="match status" value="1"/>
</dbReference>
<dbReference type="Gene3D" id="3.90.1150.10">
    <property type="entry name" value="Aspartate Aminotransferase, domain 1"/>
    <property type="match status" value="2"/>
</dbReference>
<dbReference type="Gene3D" id="3.40.640.10">
    <property type="entry name" value="Type I PLP-dependent aspartate aminotransferase-like (Major domain)"/>
    <property type="match status" value="2"/>
</dbReference>
<dbReference type="HAMAP" id="MF_00711">
    <property type="entry name" value="GcvP"/>
    <property type="match status" value="1"/>
</dbReference>
<dbReference type="InterPro" id="IPR003437">
    <property type="entry name" value="GcvP"/>
</dbReference>
<dbReference type="InterPro" id="IPR049316">
    <property type="entry name" value="GDC-P_C"/>
</dbReference>
<dbReference type="InterPro" id="IPR049315">
    <property type="entry name" value="GDC-P_N"/>
</dbReference>
<dbReference type="InterPro" id="IPR020581">
    <property type="entry name" value="GDC_P"/>
</dbReference>
<dbReference type="InterPro" id="IPR015424">
    <property type="entry name" value="PyrdxlP-dep_Trfase"/>
</dbReference>
<dbReference type="InterPro" id="IPR015421">
    <property type="entry name" value="PyrdxlP-dep_Trfase_major"/>
</dbReference>
<dbReference type="InterPro" id="IPR015422">
    <property type="entry name" value="PyrdxlP-dep_Trfase_small"/>
</dbReference>
<dbReference type="NCBIfam" id="TIGR00461">
    <property type="entry name" value="gcvP"/>
    <property type="match status" value="1"/>
</dbReference>
<dbReference type="PANTHER" id="PTHR11773:SF1">
    <property type="entry name" value="GLYCINE DEHYDROGENASE (DECARBOXYLATING), MITOCHONDRIAL"/>
    <property type="match status" value="1"/>
</dbReference>
<dbReference type="PANTHER" id="PTHR11773">
    <property type="entry name" value="GLYCINE DEHYDROGENASE, DECARBOXYLATING"/>
    <property type="match status" value="1"/>
</dbReference>
<dbReference type="Pfam" id="PF21478">
    <property type="entry name" value="GcvP2_C"/>
    <property type="match status" value="1"/>
</dbReference>
<dbReference type="Pfam" id="PF02347">
    <property type="entry name" value="GDC-P"/>
    <property type="match status" value="2"/>
</dbReference>
<dbReference type="SUPFAM" id="SSF53383">
    <property type="entry name" value="PLP-dependent transferases"/>
    <property type="match status" value="2"/>
</dbReference>
<feature type="chain" id="PRO_0000227092" description="Glycine dehydrogenase (decarboxylating)">
    <location>
        <begin position="1"/>
        <end position="949"/>
    </location>
</feature>
<feature type="modified residue" description="N6-(pyridoxal phosphate)lysine" evidence="1">
    <location>
        <position position="704"/>
    </location>
</feature>
<name>GCSP_BACFN</name>
<proteinExistence type="inferred from homology"/>
<accession>Q5LDN2</accession>
<protein>
    <recommendedName>
        <fullName evidence="1">Glycine dehydrogenase (decarboxylating)</fullName>
        <ecNumber evidence="1">1.4.4.2</ecNumber>
    </recommendedName>
    <alternativeName>
        <fullName evidence="1">Glycine cleavage system P-protein</fullName>
    </alternativeName>
    <alternativeName>
        <fullName evidence="1">Glycine decarboxylase</fullName>
    </alternativeName>
    <alternativeName>
        <fullName evidence="1">Glycine dehydrogenase (aminomethyl-transferring)</fullName>
    </alternativeName>
</protein>
<reference key="1">
    <citation type="journal article" date="2005" name="Science">
        <title>Extensive DNA inversions in the B. fragilis genome control variable gene expression.</title>
        <authorList>
            <person name="Cerdeno-Tarraga A.-M."/>
            <person name="Patrick S."/>
            <person name="Crossman L.C."/>
            <person name="Blakely G."/>
            <person name="Abratt V."/>
            <person name="Lennard N."/>
            <person name="Poxton I."/>
            <person name="Duerden B."/>
            <person name="Harris B."/>
            <person name="Quail M.A."/>
            <person name="Barron A."/>
            <person name="Clark L."/>
            <person name="Corton C."/>
            <person name="Doggett J."/>
            <person name="Holden M.T.G."/>
            <person name="Larke N."/>
            <person name="Line A."/>
            <person name="Lord A."/>
            <person name="Norbertczak H."/>
            <person name="Ormond D."/>
            <person name="Price C."/>
            <person name="Rabbinowitsch E."/>
            <person name="Woodward J."/>
            <person name="Barrell B.G."/>
            <person name="Parkhill J."/>
        </authorList>
    </citation>
    <scope>NUCLEOTIDE SEQUENCE [LARGE SCALE GENOMIC DNA]</scope>
    <source>
        <strain>ATCC 25285 / DSM 2151 / CCUG 4856 / JCM 11019 / LMG 10263 / NCTC 9343 / Onslow / VPI 2553 / EN-2</strain>
    </source>
</reference>
<sequence length="949" mass="104591">MKTDLLACRHIGVNKADAEVMLRKIGVASLDELIDKTIPANIRLKAPLALPAPMTEYEFARHIAELAGKNKLFTTYIGMGWYNTITPAVIQRNVFENPVWYTSYTPYQTEVSQGRLEALMNFQTAVCDLTAMPLANCSLLDEATAAAEAVTMMYGLRSRNQQKAGANVVFIDENIFPQTLAVITTRAIPQGIEIRTGKFRDLEFTDDLFACVLQYPNANGNAEDYREFTEKAHTANCKVAVAADILSLALLTPPGEWGADIVFGTTQRLGTPMFYGGPSAGYFATRDEYKRNMPGRIIGWSKDKYGKLCYRMALQTREQHIKREKATSNICTAQALLATMAGFYTVYHGQEGIRNIASRIHSITVFLEKSIGKLGFKQVNKQYFDTLRFILPDSVSAQQIRTIALSKEVNLRYFDNGDVGLSIDETTDVAAANILLSIFAIAAGKDFQKVDDIPEATIISEELKRQTPYLTHEVFSKYHTETEMMRYIKRLDRKDISLAQSMISLGSCTMKLNAAAEMLPLSCAEFMCMHPLVPEDQAAGYRELIHNLSEELKVITGFAGVSLQPNSGAAGEYAGLRTIRAYLESIGQGHRNKVLIPASAHGTNPASAIQAGFTTVTCACDEHGNVDMDDLRAKAEENKDDLAALMITYPSTHGIFETEIVEICQIIHACGAQVYMDGANMNAQVGLTNPGFIGADVCHLNLHKTFASPHGGGGPGVGPICVAEHLVPFLPGHGLFGNSQNEVSAAPFGSAGILPITYGYIRMMGAEGLTMATKTAILNANYLAACLKDTYGIVYRGANGFVGHEMILECRKVYEETGISENDIAKRLMDYGYHAPTLSFPVHGTLMIEPTESESLSELDNFVLTMLTIWNEIQEVKNGEADKEDNVLINAPHPEYEVVSDQWEHCYTREKAAYPIESVRENKFWVNVARVDNTLGDRKLLPTCYGCFD</sequence>
<comment type="function">
    <text evidence="1">The glycine cleavage system catalyzes the degradation of glycine. The P protein binds the alpha-amino group of glycine through its pyridoxal phosphate cofactor; CO(2) is released and the remaining methylamine moiety is then transferred to the lipoamide cofactor of the H protein.</text>
</comment>
<comment type="catalytic activity">
    <reaction evidence="1">
        <text>N(6)-[(R)-lipoyl]-L-lysyl-[glycine-cleavage complex H protein] + glycine + H(+) = N(6)-[(R)-S(8)-aminomethyldihydrolipoyl]-L-lysyl-[glycine-cleavage complex H protein] + CO2</text>
        <dbReference type="Rhea" id="RHEA:24304"/>
        <dbReference type="Rhea" id="RHEA-COMP:10494"/>
        <dbReference type="Rhea" id="RHEA-COMP:10495"/>
        <dbReference type="ChEBI" id="CHEBI:15378"/>
        <dbReference type="ChEBI" id="CHEBI:16526"/>
        <dbReference type="ChEBI" id="CHEBI:57305"/>
        <dbReference type="ChEBI" id="CHEBI:83099"/>
        <dbReference type="ChEBI" id="CHEBI:83143"/>
        <dbReference type="EC" id="1.4.4.2"/>
    </reaction>
</comment>
<comment type="cofactor">
    <cofactor evidence="1">
        <name>pyridoxal 5'-phosphate</name>
        <dbReference type="ChEBI" id="CHEBI:597326"/>
    </cofactor>
</comment>
<comment type="subunit">
    <text evidence="1">The glycine cleavage system is composed of four proteins: P, T, L and H.</text>
</comment>
<comment type="similarity">
    <text evidence="1">Belongs to the GcvP family.</text>
</comment>
<gene>
    <name evidence="1" type="primary">gcvP</name>
    <name type="ordered locus">BF2079</name>
</gene>
<organism>
    <name type="scientific">Bacteroides fragilis (strain ATCC 25285 / DSM 2151 / CCUG 4856 / JCM 11019 / LMG 10263 / NCTC 9343 / Onslow / VPI 2553 / EN-2)</name>
    <dbReference type="NCBI Taxonomy" id="272559"/>
    <lineage>
        <taxon>Bacteria</taxon>
        <taxon>Pseudomonadati</taxon>
        <taxon>Bacteroidota</taxon>
        <taxon>Bacteroidia</taxon>
        <taxon>Bacteroidales</taxon>
        <taxon>Bacteroidaceae</taxon>
        <taxon>Bacteroides</taxon>
    </lineage>
</organism>
<keyword id="KW-0560">Oxidoreductase</keyword>
<keyword id="KW-0663">Pyridoxal phosphate</keyword>
<evidence type="ECO:0000255" key="1">
    <source>
        <dbReference type="HAMAP-Rule" id="MF_00711"/>
    </source>
</evidence>